<keyword id="KW-0150">Chloroplast</keyword>
<keyword id="KW-0934">Plastid</keyword>
<keyword id="KW-1185">Reference proteome</keyword>
<keyword id="KW-0687">Ribonucleoprotein</keyword>
<keyword id="KW-0689">Ribosomal protein</keyword>
<dbReference type="EMBL" id="EF067920">
    <property type="protein sequence ID" value="ABK20653.1"/>
    <property type="molecule type" value="Genomic_DNA"/>
</dbReference>
<dbReference type="RefSeq" id="YP_874430.1">
    <property type="nucleotide sequence ID" value="NC_008588.1"/>
</dbReference>
<dbReference type="SMR" id="A0T0F5"/>
<dbReference type="STRING" id="556484.A0T0F5"/>
<dbReference type="GeneID" id="4524604"/>
<dbReference type="InParanoid" id="A0T0F5"/>
<dbReference type="Proteomes" id="UP000000759">
    <property type="component" value="Chloroplast"/>
</dbReference>
<dbReference type="GO" id="GO:0009507">
    <property type="term" value="C:chloroplast"/>
    <property type="evidence" value="ECO:0007669"/>
    <property type="project" value="UniProtKB-SubCell"/>
</dbReference>
<dbReference type="GO" id="GO:0015934">
    <property type="term" value="C:large ribosomal subunit"/>
    <property type="evidence" value="ECO:0007669"/>
    <property type="project" value="TreeGrafter"/>
</dbReference>
<dbReference type="GO" id="GO:0003735">
    <property type="term" value="F:structural constituent of ribosome"/>
    <property type="evidence" value="ECO:0007669"/>
    <property type="project" value="InterPro"/>
</dbReference>
<dbReference type="GO" id="GO:0006412">
    <property type="term" value="P:translation"/>
    <property type="evidence" value="ECO:0007669"/>
    <property type="project" value="UniProtKB-UniRule"/>
</dbReference>
<dbReference type="FunFam" id="4.10.410.60:FF:000001">
    <property type="entry name" value="50S ribosomal protein L35"/>
    <property type="match status" value="1"/>
</dbReference>
<dbReference type="Gene3D" id="4.10.410.60">
    <property type="match status" value="1"/>
</dbReference>
<dbReference type="HAMAP" id="MF_00514">
    <property type="entry name" value="Ribosomal_bL35"/>
    <property type="match status" value="1"/>
</dbReference>
<dbReference type="InterPro" id="IPR001706">
    <property type="entry name" value="Ribosomal_bL35"/>
</dbReference>
<dbReference type="InterPro" id="IPR021137">
    <property type="entry name" value="Ribosomal_bL35-like"/>
</dbReference>
<dbReference type="InterPro" id="IPR018265">
    <property type="entry name" value="Ribosomal_bL35_CS"/>
</dbReference>
<dbReference type="InterPro" id="IPR037229">
    <property type="entry name" value="Ribosomal_bL35_sf"/>
</dbReference>
<dbReference type="NCBIfam" id="TIGR00001">
    <property type="entry name" value="rpmI_bact"/>
    <property type="match status" value="1"/>
</dbReference>
<dbReference type="PANTHER" id="PTHR33343">
    <property type="entry name" value="54S RIBOSOMAL PROTEIN BL35M"/>
    <property type="match status" value="1"/>
</dbReference>
<dbReference type="PANTHER" id="PTHR33343:SF1">
    <property type="entry name" value="LARGE RIBOSOMAL SUBUNIT PROTEIN BL35M"/>
    <property type="match status" value="1"/>
</dbReference>
<dbReference type="Pfam" id="PF01632">
    <property type="entry name" value="Ribosomal_L35p"/>
    <property type="match status" value="1"/>
</dbReference>
<dbReference type="PRINTS" id="PR00064">
    <property type="entry name" value="RIBOSOMALL35"/>
</dbReference>
<dbReference type="SUPFAM" id="SSF143034">
    <property type="entry name" value="L35p-like"/>
    <property type="match status" value="1"/>
</dbReference>
<dbReference type="PROSITE" id="PS00936">
    <property type="entry name" value="RIBOSOMAL_L35"/>
    <property type="match status" value="1"/>
</dbReference>
<geneLocation type="chloroplast"/>
<sequence length="64" mass="7519">MPKLKTRKAAAKRYKRTGTSNFLRRHAFKGHLLMKKSNKQKRKLSQTICVSRSDIKSIKLMLPY</sequence>
<feature type="chain" id="PRO_0000276531" description="Large ribosomal subunit protein bL35c">
    <location>
        <begin position="1"/>
        <end position="64"/>
    </location>
</feature>
<comment type="subcellular location">
    <subcellularLocation>
        <location>Plastid</location>
        <location>Chloroplast</location>
    </subcellularLocation>
</comment>
<comment type="similarity">
    <text evidence="1">Belongs to the bacterial ribosomal protein bL35 family.</text>
</comment>
<evidence type="ECO:0000255" key="1">
    <source>
        <dbReference type="HAMAP-Rule" id="MF_00514"/>
    </source>
</evidence>
<evidence type="ECO:0000305" key="2"/>
<proteinExistence type="inferred from homology"/>
<name>RK35_PHATC</name>
<gene>
    <name evidence="1" type="primary">rpl35</name>
</gene>
<organism>
    <name type="scientific">Phaeodactylum tricornutum (strain CCAP 1055/1)</name>
    <dbReference type="NCBI Taxonomy" id="556484"/>
    <lineage>
        <taxon>Eukaryota</taxon>
        <taxon>Sar</taxon>
        <taxon>Stramenopiles</taxon>
        <taxon>Ochrophyta</taxon>
        <taxon>Bacillariophyta</taxon>
        <taxon>Bacillariophyceae</taxon>
        <taxon>Bacillariophycidae</taxon>
        <taxon>Naviculales</taxon>
        <taxon>Phaeodactylaceae</taxon>
        <taxon>Phaeodactylum</taxon>
    </lineage>
</organism>
<accession>A0T0F5</accession>
<reference key="1">
    <citation type="journal article" date="2007" name="Mol. Genet. Genomics">
        <title>Chloroplast genomes of the diatoms Phaeodactylum tricornutum and Thalassiosira pseudonana: comparison with other plastid genomes of the red lineage.</title>
        <authorList>
            <person name="Oudot-Le Secq M.-P."/>
            <person name="Grimwood J."/>
            <person name="Shapiro H."/>
            <person name="Armbrust E.V."/>
            <person name="Bowler C."/>
            <person name="Green B.R."/>
        </authorList>
    </citation>
    <scope>NUCLEOTIDE SEQUENCE [LARGE SCALE GENOMIC DNA]</scope>
    <source>
        <strain>CCAP 1055/1</strain>
    </source>
</reference>
<protein>
    <recommendedName>
        <fullName evidence="1">Large ribosomal subunit protein bL35c</fullName>
    </recommendedName>
    <alternativeName>
        <fullName evidence="2">50S ribosomal protein L35, chloroplastic</fullName>
    </alternativeName>
</protein>